<feature type="chain" id="PRO_1000024419" description="DNA protection during starvation protein">
    <location>
        <begin position="1"/>
        <end position="167"/>
    </location>
</feature>
<feature type="binding site" evidence="1">
    <location>
        <position position="51"/>
    </location>
    <ligand>
        <name>Fe cation</name>
        <dbReference type="ChEBI" id="CHEBI:24875"/>
    </ligand>
</feature>
<feature type="binding site" evidence="1">
    <location>
        <position position="78"/>
    </location>
    <ligand>
        <name>Fe cation</name>
        <dbReference type="ChEBI" id="CHEBI:24875"/>
    </ligand>
</feature>
<feature type="binding site" evidence="1">
    <location>
        <position position="82"/>
    </location>
    <ligand>
        <name>Fe cation</name>
        <dbReference type="ChEBI" id="CHEBI:24875"/>
    </ligand>
</feature>
<protein>
    <recommendedName>
        <fullName evidence="1">DNA protection during starvation protein</fullName>
        <ecNumber evidence="1">1.16.-.-</ecNumber>
    </recommendedName>
</protein>
<keyword id="KW-0963">Cytoplasm</keyword>
<keyword id="KW-0226">DNA condensation</keyword>
<keyword id="KW-0238">DNA-binding</keyword>
<keyword id="KW-0408">Iron</keyword>
<keyword id="KW-0409">Iron storage</keyword>
<keyword id="KW-0479">Metal-binding</keyword>
<keyword id="KW-0560">Oxidoreductase</keyword>
<sequence>MSTAKLVKTKPSELLYTRNDVEEHVKVATIKRLNQMVIQFIDLSLITKQAHWNMRGANFVAVHEMLDGFRTALTDHLDTFAERAVQLGGVALGTAQVINDKTPLKSYPTNIHSVQEHLKALAERYAIVANDIRKAITEVEDENSADMFTAASRDLDKFLWFIESNIE</sequence>
<reference key="1">
    <citation type="submission" date="2007-02" db="EMBL/GenBank/DDBJ databases">
        <title>Complete sequence of chromosome of Yersinia pestis Pestoides F.</title>
        <authorList>
            <consortium name="US DOE Joint Genome Institute"/>
            <person name="Copeland A."/>
            <person name="Lucas S."/>
            <person name="Lapidus A."/>
            <person name="Barry K."/>
            <person name="Detter J.C."/>
            <person name="Glavina del Rio T."/>
            <person name="Hammon N."/>
            <person name="Israni S."/>
            <person name="Dalin E."/>
            <person name="Tice H."/>
            <person name="Pitluck S."/>
            <person name="Di Bartolo G."/>
            <person name="Chain P."/>
            <person name="Malfatti S."/>
            <person name="Shin M."/>
            <person name="Vergez L."/>
            <person name="Schmutz J."/>
            <person name="Larimer F."/>
            <person name="Land M."/>
            <person name="Hauser L."/>
            <person name="Worsham P."/>
            <person name="Chu M."/>
            <person name="Bearden S."/>
            <person name="Garcia E."/>
            <person name="Richardson P."/>
        </authorList>
    </citation>
    <scope>NUCLEOTIDE SEQUENCE [LARGE SCALE GENOMIC DNA]</scope>
    <source>
        <strain>Pestoides F</strain>
    </source>
</reference>
<organism>
    <name type="scientific">Yersinia pestis (strain Pestoides F)</name>
    <dbReference type="NCBI Taxonomy" id="386656"/>
    <lineage>
        <taxon>Bacteria</taxon>
        <taxon>Pseudomonadati</taxon>
        <taxon>Pseudomonadota</taxon>
        <taxon>Gammaproteobacteria</taxon>
        <taxon>Enterobacterales</taxon>
        <taxon>Yersiniaceae</taxon>
        <taxon>Yersinia</taxon>
    </lineage>
</organism>
<comment type="function">
    <text evidence="1">During stationary phase, binds the chromosome non-specifically, forming a highly ordered and stable dps-DNA co-crystal within which chromosomal DNA is condensed and protected from diverse damages. It protects DNA from oxidative damage by sequestering intracellular Fe(2+) ion and storing it in the form of Fe(3+) oxyhydroxide mineral, which can be released after reduction. One hydrogen peroxide oxidizes two Fe(2+) ions, which prevents hydroxyl radical production by the Fenton reaction.</text>
</comment>
<comment type="catalytic activity">
    <reaction evidence="1">
        <text>2 Fe(2+) + H2O2 + 2 H(+) = 2 Fe(3+) + 2 H2O</text>
        <dbReference type="Rhea" id="RHEA:48712"/>
        <dbReference type="ChEBI" id="CHEBI:15377"/>
        <dbReference type="ChEBI" id="CHEBI:15378"/>
        <dbReference type="ChEBI" id="CHEBI:16240"/>
        <dbReference type="ChEBI" id="CHEBI:29033"/>
        <dbReference type="ChEBI" id="CHEBI:29034"/>
    </reaction>
</comment>
<comment type="subunit">
    <text evidence="1">Homododecamer. The 12 subunits form a hollow sphere into which the mineral iron core of up to 500 Fe(3+) can be deposited.</text>
</comment>
<comment type="subcellular location">
    <subcellularLocation>
        <location evidence="1">Cytoplasm</location>
    </subcellularLocation>
</comment>
<comment type="similarity">
    <text evidence="1">Belongs to the Dps family.</text>
</comment>
<dbReference type="EC" id="1.16.-.-" evidence="1"/>
<dbReference type="EMBL" id="CP000668">
    <property type="protein sequence ID" value="ABP40305.1"/>
    <property type="molecule type" value="Genomic_DNA"/>
</dbReference>
<dbReference type="RefSeq" id="WP_002210233.1">
    <property type="nucleotide sequence ID" value="NZ_CP009715.1"/>
</dbReference>
<dbReference type="SMR" id="A4TLZ3"/>
<dbReference type="GeneID" id="57976175"/>
<dbReference type="KEGG" id="ypp:YPDSF_1922"/>
<dbReference type="PATRIC" id="fig|386656.14.peg.3384"/>
<dbReference type="GO" id="GO:0005737">
    <property type="term" value="C:cytoplasm"/>
    <property type="evidence" value="ECO:0007669"/>
    <property type="project" value="UniProtKB-SubCell"/>
</dbReference>
<dbReference type="GO" id="GO:0003677">
    <property type="term" value="F:DNA binding"/>
    <property type="evidence" value="ECO:0007669"/>
    <property type="project" value="UniProtKB-UniRule"/>
</dbReference>
<dbReference type="GO" id="GO:0008199">
    <property type="term" value="F:ferric iron binding"/>
    <property type="evidence" value="ECO:0007669"/>
    <property type="project" value="UniProtKB-UniRule"/>
</dbReference>
<dbReference type="GO" id="GO:0016722">
    <property type="term" value="F:oxidoreductase activity, acting on metal ions"/>
    <property type="evidence" value="ECO:0007669"/>
    <property type="project" value="InterPro"/>
</dbReference>
<dbReference type="GO" id="GO:0030261">
    <property type="term" value="P:chromosome condensation"/>
    <property type="evidence" value="ECO:0007669"/>
    <property type="project" value="UniProtKB-KW"/>
</dbReference>
<dbReference type="GO" id="GO:0006879">
    <property type="term" value="P:intracellular iron ion homeostasis"/>
    <property type="evidence" value="ECO:0007669"/>
    <property type="project" value="UniProtKB-KW"/>
</dbReference>
<dbReference type="CDD" id="cd01043">
    <property type="entry name" value="DPS"/>
    <property type="match status" value="1"/>
</dbReference>
<dbReference type="Gene3D" id="1.20.1260.10">
    <property type="match status" value="1"/>
</dbReference>
<dbReference type="HAMAP" id="MF_01441">
    <property type="entry name" value="Dps"/>
    <property type="match status" value="1"/>
</dbReference>
<dbReference type="InterPro" id="IPR002177">
    <property type="entry name" value="DPS_DNA-bd"/>
</dbReference>
<dbReference type="InterPro" id="IPR023188">
    <property type="entry name" value="DPS_DNA-bd_CS"/>
</dbReference>
<dbReference type="InterPro" id="IPR023067">
    <property type="entry name" value="Dps_gammaproteobac"/>
</dbReference>
<dbReference type="InterPro" id="IPR012347">
    <property type="entry name" value="Ferritin-like"/>
</dbReference>
<dbReference type="InterPro" id="IPR009078">
    <property type="entry name" value="Ferritin-like_SF"/>
</dbReference>
<dbReference type="InterPro" id="IPR008331">
    <property type="entry name" value="Ferritin_DPS_dom"/>
</dbReference>
<dbReference type="NCBIfam" id="NF006975">
    <property type="entry name" value="PRK09448.1"/>
    <property type="match status" value="1"/>
</dbReference>
<dbReference type="PANTHER" id="PTHR42932:SF3">
    <property type="entry name" value="DNA PROTECTION DURING STARVATION PROTEIN"/>
    <property type="match status" value="1"/>
</dbReference>
<dbReference type="PANTHER" id="PTHR42932">
    <property type="entry name" value="GENERAL STRESS PROTEIN 20U"/>
    <property type="match status" value="1"/>
</dbReference>
<dbReference type="Pfam" id="PF00210">
    <property type="entry name" value="Ferritin"/>
    <property type="match status" value="1"/>
</dbReference>
<dbReference type="PIRSF" id="PIRSF005900">
    <property type="entry name" value="Dps"/>
    <property type="match status" value="1"/>
</dbReference>
<dbReference type="PRINTS" id="PR01346">
    <property type="entry name" value="HELNAPAPROT"/>
</dbReference>
<dbReference type="SUPFAM" id="SSF47240">
    <property type="entry name" value="Ferritin-like"/>
    <property type="match status" value="1"/>
</dbReference>
<dbReference type="PROSITE" id="PS00818">
    <property type="entry name" value="DPS_1"/>
    <property type="match status" value="1"/>
</dbReference>
<evidence type="ECO:0000255" key="1">
    <source>
        <dbReference type="HAMAP-Rule" id="MF_01441"/>
    </source>
</evidence>
<name>DPS_YERPP</name>
<proteinExistence type="inferred from homology"/>
<gene>
    <name evidence="1" type="primary">dps</name>
    <name type="ordered locus">YPDSF_1922</name>
</gene>
<accession>A4TLZ3</accession>